<reference key="1">
    <citation type="journal article" date="2006" name="PLoS Genet.">
        <title>Genome sequence of Rickettsia bellii illuminates the role of amoebae in gene exchanges between intracellular pathogens.</title>
        <authorList>
            <person name="Ogata H."/>
            <person name="La Scola B."/>
            <person name="Audic S."/>
            <person name="Renesto P."/>
            <person name="Blanc G."/>
            <person name="Robert C."/>
            <person name="Fournier P.-E."/>
            <person name="Claverie J.-M."/>
            <person name="Raoult D."/>
        </authorList>
    </citation>
    <scope>NUCLEOTIDE SEQUENCE [LARGE SCALE GENOMIC DNA]</scope>
    <source>
        <strain>RML369-C</strain>
    </source>
</reference>
<organism>
    <name type="scientific">Rickettsia bellii (strain RML369-C)</name>
    <dbReference type="NCBI Taxonomy" id="336407"/>
    <lineage>
        <taxon>Bacteria</taxon>
        <taxon>Pseudomonadati</taxon>
        <taxon>Pseudomonadota</taxon>
        <taxon>Alphaproteobacteria</taxon>
        <taxon>Rickettsiales</taxon>
        <taxon>Rickettsiaceae</taxon>
        <taxon>Rickettsieae</taxon>
        <taxon>Rickettsia</taxon>
        <taxon>belli group</taxon>
    </lineage>
</organism>
<dbReference type="EC" id="3.4.21.92" evidence="1"/>
<dbReference type="EMBL" id="CP000087">
    <property type="protein sequence ID" value="ABE04492.1"/>
    <property type="status" value="ALT_INIT"/>
    <property type="molecule type" value="Genomic_DNA"/>
</dbReference>
<dbReference type="SMR" id="Q1RJH2"/>
<dbReference type="MEROPS" id="S14.001"/>
<dbReference type="KEGG" id="rbe:RBE_0411"/>
<dbReference type="eggNOG" id="COG0740">
    <property type="taxonomic scope" value="Bacteria"/>
</dbReference>
<dbReference type="HOGENOM" id="CLU_058707_3_3_5"/>
<dbReference type="Proteomes" id="UP000001951">
    <property type="component" value="Chromosome"/>
</dbReference>
<dbReference type="GO" id="GO:0005737">
    <property type="term" value="C:cytoplasm"/>
    <property type="evidence" value="ECO:0007669"/>
    <property type="project" value="UniProtKB-SubCell"/>
</dbReference>
<dbReference type="GO" id="GO:0009368">
    <property type="term" value="C:endopeptidase Clp complex"/>
    <property type="evidence" value="ECO:0007669"/>
    <property type="project" value="TreeGrafter"/>
</dbReference>
<dbReference type="GO" id="GO:0004176">
    <property type="term" value="F:ATP-dependent peptidase activity"/>
    <property type="evidence" value="ECO:0007669"/>
    <property type="project" value="InterPro"/>
</dbReference>
<dbReference type="GO" id="GO:0051117">
    <property type="term" value="F:ATPase binding"/>
    <property type="evidence" value="ECO:0007669"/>
    <property type="project" value="TreeGrafter"/>
</dbReference>
<dbReference type="GO" id="GO:0004252">
    <property type="term" value="F:serine-type endopeptidase activity"/>
    <property type="evidence" value="ECO:0007669"/>
    <property type="project" value="UniProtKB-UniRule"/>
</dbReference>
<dbReference type="GO" id="GO:0006515">
    <property type="term" value="P:protein quality control for misfolded or incompletely synthesized proteins"/>
    <property type="evidence" value="ECO:0007669"/>
    <property type="project" value="TreeGrafter"/>
</dbReference>
<dbReference type="CDD" id="cd07017">
    <property type="entry name" value="S14_ClpP_2"/>
    <property type="match status" value="1"/>
</dbReference>
<dbReference type="FunFam" id="3.90.226.10:FF:000001">
    <property type="entry name" value="ATP-dependent Clp protease proteolytic subunit"/>
    <property type="match status" value="1"/>
</dbReference>
<dbReference type="Gene3D" id="3.90.226.10">
    <property type="entry name" value="2-enoyl-CoA Hydratase, Chain A, domain 1"/>
    <property type="match status" value="1"/>
</dbReference>
<dbReference type="HAMAP" id="MF_00444">
    <property type="entry name" value="ClpP"/>
    <property type="match status" value="1"/>
</dbReference>
<dbReference type="InterPro" id="IPR001907">
    <property type="entry name" value="ClpP"/>
</dbReference>
<dbReference type="InterPro" id="IPR029045">
    <property type="entry name" value="ClpP/crotonase-like_dom_sf"/>
</dbReference>
<dbReference type="InterPro" id="IPR023562">
    <property type="entry name" value="ClpP/TepA"/>
</dbReference>
<dbReference type="InterPro" id="IPR033135">
    <property type="entry name" value="ClpP_His_AS"/>
</dbReference>
<dbReference type="InterPro" id="IPR018215">
    <property type="entry name" value="ClpP_Ser_AS"/>
</dbReference>
<dbReference type="NCBIfam" id="TIGR00493">
    <property type="entry name" value="clpP"/>
    <property type="match status" value="1"/>
</dbReference>
<dbReference type="NCBIfam" id="NF001368">
    <property type="entry name" value="PRK00277.1"/>
    <property type="match status" value="1"/>
</dbReference>
<dbReference type="NCBIfam" id="NF009205">
    <property type="entry name" value="PRK12553.1"/>
    <property type="match status" value="1"/>
</dbReference>
<dbReference type="PANTHER" id="PTHR10381">
    <property type="entry name" value="ATP-DEPENDENT CLP PROTEASE PROTEOLYTIC SUBUNIT"/>
    <property type="match status" value="1"/>
</dbReference>
<dbReference type="PANTHER" id="PTHR10381:SF70">
    <property type="entry name" value="ATP-DEPENDENT CLP PROTEASE PROTEOLYTIC SUBUNIT"/>
    <property type="match status" value="1"/>
</dbReference>
<dbReference type="Pfam" id="PF00574">
    <property type="entry name" value="CLP_protease"/>
    <property type="match status" value="1"/>
</dbReference>
<dbReference type="PRINTS" id="PR00127">
    <property type="entry name" value="CLPPROTEASEP"/>
</dbReference>
<dbReference type="SUPFAM" id="SSF52096">
    <property type="entry name" value="ClpP/crotonase"/>
    <property type="match status" value="1"/>
</dbReference>
<dbReference type="PROSITE" id="PS00382">
    <property type="entry name" value="CLP_PROTEASE_HIS"/>
    <property type="match status" value="1"/>
</dbReference>
<dbReference type="PROSITE" id="PS00381">
    <property type="entry name" value="CLP_PROTEASE_SER"/>
    <property type="match status" value="1"/>
</dbReference>
<evidence type="ECO:0000255" key="1">
    <source>
        <dbReference type="HAMAP-Rule" id="MF_00444"/>
    </source>
</evidence>
<evidence type="ECO:0000305" key="2"/>
<protein>
    <recommendedName>
        <fullName evidence="1">ATP-dependent Clp protease proteolytic subunit</fullName>
        <ecNumber evidence="1">3.4.21.92</ecNumber>
    </recommendedName>
    <alternativeName>
        <fullName evidence="1">Endopeptidase Clp</fullName>
    </alternativeName>
</protein>
<name>CLPP_RICBR</name>
<gene>
    <name evidence="1" type="primary">clpP</name>
    <name type="ordered locus">RBE_0411</name>
</gene>
<accession>Q1RJH2</accession>
<feature type="chain" id="PRO_0000252845" description="ATP-dependent Clp protease proteolytic subunit">
    <location>
        <begin position="1"/>
        <end position="227"/>
    </location>
</feature>
<feature type="active site" description="Nucleophile" evidence="1">
    <location>
        <position position="120"/>
    </location>
</feature>
<feature type="active site" evidence="1">
    <location>
        <position position="145"/>
    </location>
</feature>
<proteinExistence type="inferred from homology"/>
<keyword id="KW-0963">Cytoplasm</keyword>
<keyword id="KW-0378">Hydrolase</keyword>
<keyword id="KW-0645">Protease</keyword>
<keyword id="KW-0720">Serine protease</keyword>
<sequence length="227" mass="25808">MRATPPRDDTYPSNENFKEKYPMSYVPIVIEQTSRGERAYDIYSRLLKERIIFVCGPIEDHMANLITAQLLFLEAENPEKDIYMYINSPGGVVTAGLAIYDTMQYIKPKVATLCIGQACSMGSFLLCGGEKGMRYSLPHSRVMIHQPSGGYRGQATDIEIHAQETLKIKKILNSLYSKHTGQDVKHVEKSMERDNFMSPEEAKKFGIIDKIITHRDIKLLKDKEQGQ</sequence>
<comment type="function">
    <text evidence="1">Cleaves peptides in various proteins in a process that requires ATP hydrolysis. Has a chymotrypsin-like activity. Plays a major role in the degradation of misfolded proteins.</text>
</comment>
<comment type="catalytic activity">
    <reaction evidence="1">
        <text>Hydrolysis of proteins to small peptides in the presence of ATP and magnesium. alpha-casein is the usual test substrate. In the absence of ATP, only oligopeptides shorter than five residues are hydrolyzed (such as succinyl-Leu-Tyr-|-NHMec, and Leu-Tyr-Leu-|-Tyr-Trp, in which cleavage of the -Tyr-|-Leu- and -Tyr-|-Trp bonds also occurs).</text>
        <dbReference type="EC" id="3.4.21.92"/>
    </reaction>
</comment>
<comment type="subunit">
    <text evidence="1">Fourteen ClpP subunits assemble into 2 heptameric rings which stack back to back to give a disk-like structure with a central cavity, resembling the structure of eukaryotic proteasomes.</text>
</comment>
<comment type="subcellular location">
    <subcellularLocation>
        <location evidence="1">Cytoplasm</location>
    </subcellularLocation>
</comment>
<comment type="similarity">
    <text evidence="1">Belongs to the peptidase S14 family.</text>
</comment>
<comment type="sequence caution" evidence="2">
    <conflict type="erroneous initiation">
        <sequence resource="EMBL-CDS" id="ABE04492"/>
    </conflict>
</comment>